<accession>P0DKA7</accession>
<proteinExistence type="inferred from homology"/>
<keyword id="KW-1048">Host nucleus</keyword>
<keyword id="KW-1185">Reference proteome</keyword>
<feature type="chain" id="PRO_0000438747" description="Protein E8^E2C">
    <location>
        <begin position="1"/>
        <end position="175"/>
    </location>
</feature>
<feature type="region of interest" description="Disordered" evidence="2">
    <location>
        <begin position="15"/>
        <end position="98"/>
    </location>
</feature>
<feature type="compositionally biased region" description="Polar residues" evidence="2">
    <location>
        <begin position="17"/>
        <end position="41"/>
    </location>
</feature>
<feature type="compositionally biased region" description="Polar residues" evidence="2">
    <location>
        <begin position="57"/>
        <end position="67"/>
    </location>
</feature>
<feature type="compositionally biased region" description="Basic and acidic residues" evidence="2">
    <location>
        <begin position="72"/>
        <end position="82"/>
    </location>
</feature>
<feature type="compositionally biased region" description="Polar residues" evidence="2">
    <location>
        <begin position="83"/>
        <end position="94"/>
    </location>
</feature>
<dbReference type="EMBL" id="U37488">
    <property type="status" value="NOT_ANNOTATED_CDS"/>
    <property type="molecule type" value="Genomic_DNA"/>
</dbReference>
<dbReference type="SMR" id="P0DKA7"/>
<dbReference type="Proteomes" id="UP000007665">
    <property type="component" value="Segment"/>
</dbReference>
<dbReference type="GO" id="GO:0042025">
    <property type="term" value="C:host cell nucleus"/>
    <property type="evidence" value="ECO:0007669"/>
    <property type="project" value="UniProtKB-SubCell"/>
</dbReference>
<dbReference type="GO" id="GO:0003677">
    <property type="term" value="F:DNA binding"/>
    <property type="evidence" value="ECO:0007669"/>
    <property type="project" value="InterPro"/>
</dbReference>
<dbReference type="GO" id="GO:0003700">
    <property type="term" value="F:DNA-binding transcription factor activity"/>
    <property type="evidence" value="ECO:0007669"/>
    <property type="project" value="InterPro"/>
</dbReference>
<dbReference type="GO" id="GO:0006275">
    <property type="term" value="P:regulation of DNA replication"/>
    <property type="evidence" value="ECO:0007669"/>
    <property type="project" value="InterPro"/>
</dbReference>
<dbReference type="Gene3D" id="3.30.70.330">
    <property type="match status" value="1"/>
</dbReference>
<dbReference type="InterPro" id="IPR035975">
    <property type="entry name" value="E2/EBNA1_C_sf"/>
</dbReference>
<dbReference type="InterPro" id="IPR012677">
    <property type="entry name" value="Nucleotide-bd_a/b_plait_sf"/>
</dbReference>
<dbReference type="InterPro" id="IPR000427">
    <property type="entry name" value="Papillomavirus_E2_C"/>
</dbReference>
<dbReference type="Pfam" id="PF00511">
    <property type="entry name" value="PPV_E2_C"/>
    <property type="match status" value="1"/>
</dbReference>
<dbReference type="SUPFAM" id="SSF54957">
    <property type="entry name" value="Viral DNA-binding domain"/>
    <property type="match status" value="1"/>
</dbReference>
<organism>
    <name type="scientific">Human papillomavirus type 54</name>
    <dbReference type="NCBI Taxonomy" id="1671798"/>
    <lineage>
        <taxon>Viruses</taxon>
        <taxon>Monodnaviria</taxon>
        <taxon>Shotokuvirae</taxon>
        <taxon>Cossaviricota</taxon>
        <taxon>Papovaviricetes</taxon>
        <taxon>Zurhausenvirales</taxon>
        <taxon>Papillomaviridae</taxon>
        <taxon>Firstpapillomavirinae</taxon>
        <taxon>Alphapapillomavirus</taxon>
        <taxon>Alphapapillomavirus 13</taxon>
    </lineage>
</organism>
<reference key="1">
    <citation type="submission" date="1995-10" db="EMBL/GenBank/DDBJ databases">
        <authorList>
            <person name="Delius H."/>
        </authorList>
    </citation>
    <scope>NUCLEOTIDE SEQUENCE [GENOMIC DNA]</scope>
</reference>
<comment type="function">
    <text evidence="1">Plays a role in limiting the replication of viral DNA in keratinocytes. Recruits the host NCoR/SMRT complex to viral replication foci to mediate repression of both viral replication and transcription.</text>
</comment>
<comment type="subcellular location">
    <subcellularLocation>
        <location evidence="1">Host nucleus</location>
    </subcellularLocation>
</comment>
<comment type="similarity">
    <text evidence="3">Belongs to the papillomaviridae E8^E2C protein family.</text>
</comment>
<protein>
    <recommendedName>
        <fullName>Protein E8^E2C</fullName>
    </recommendedName>
</protein>
<sequence>MAILTWKLRWSTEEALSISSTGTAEHTRPANSTPRTDNSTKAIPCTPPPRKRARVYSTDQQPHSTSDPVGCDNDRHISDDNNKNQGRHTSSGDTTPIVHFKGEPNTLKCFRQRIQKYKHLFEQASSTWHWACVPGTTKNRGIVTLTYSSVEQRQQFLVTVRIPPSISMSLGVMSL</sequence>
<organismHost>
    <name type="scientific">Homo sapiens</name>
    <name type="common">Human</name>
    <dbReference type="NCBI Taxonomy" id="9606"/>
</organismHost>
<name>VE8E2_HPV54</name>
<evidence type="ECO:0000250" key="1">
    <source>
        <dbReference type="UniProtKB" id="P0DKA0"/>
    </source>
</evidence>
<evidence type="ECO:0000256" key="2">
    <source>
        <dbReference type="SAM" id="MobiDB-lite"/>
    </source>
</evidence>
<evidence type="ECO:0000305" key="3"/>